<organism>
    <name type="scientific">Methanocorpusculum labreanum (strain ATCC 43576 / DSM 4855 / Z)</name>
    <dbReference type="NCBI Taxonomy" id="410358"/>
    <lineage>
        <taxon>Archaea</taxon>
        <taxon>Methanobacteriati</taxon>
        <taxon>Methanobacteriota</taxon>
        <taxon>Stenosarchaea group</taxon>
        <taxon>Methanomicrobia</taxon>
        <taxon>Methanomicrobiales</taxon>
        <taxon>Methanocorpusculaceae</taxon>
        <taxon>Methanocorpusculum</taxon>
    </lineage>
</organism>
<sequence>MADADIRNDIYVLALENAVKHKAVPRAGAILGSVMGAHPELRSKAKEINALIPEILEEVAALSIEEREEKLMSLNPGAIEKMHEKKERSHELPDLPNAESGVVMRFAPNPSGPLHLGHARASVLNDYYVKKYGGKFYYRVEDTDPKRVDPSAYEMVSEDLAWLGIGITDVVYQSDRFAIYYEYARKLLELGGAYMCTCDNNEFREKKLKKIACPCREISVEENLKRFDDMLAGKYAEGEITLRVKTDIAHPDPAVRDFAAMRVLTSTPHPRKPAIFVYPLMNFSVAVDDHLLGMTHVIRGKDHIANTRRQEYIYNYFGWKMPYFYHYGRMSIAGLELSTSGMRKGINEGLYTGWDDIHLGTLRALARRGIQPEAVRAATIDIGMGDTDISFSWENLFAQNKAVIDAGADRYFFVPDAVEVEIAGAPKTEAHAPVYPNQPERGERVLPFTGRVLLPKSEMEKGGMLRLKDLFNINITGPNSAEYAGDSLAEARSQKAAIVQWLPTETAAPCSLLTPEGIQEGFSEPAVLGYLGRIVQFERVGFSKIDAVNDGKVIAYFTHR</sequence>
<evidence type="ECO:0000255" key="1">
    <source>
        <dbReference type="HAMAP-Rule" id="MF_02076"/>
    </source>
</evidence>
<accession>A2SRG2</accession>
<feature type="chain" id="PRO_0000331008" description="Glutamate--tRNA ligase">
    <location>
        <begin position="1"/>
        <end position="560"/>
    </location>
</feature>
<feature type="short sequence motif" description="'HIGH' region" evidence="1">
    <location>
        <begin position="108"/>
        <end position="118"/>
    </location>
</feature>
<reference key="1">
    <citation type="journal article" date="2009" name="Stand. Genomic Sci.">
        <title>Complete genome sequence of Methanocorpusculum labreanum type strain Z.</title>
        <authorList>
            <person name="Anderson I.J."/>
            <person name="Sieprawska-Lupa M."/>
            <person name="Goltsman E."/>
            <person name="Lapidus A."/>
            <person name="Copeland A."/>
            <person name="Glavina Del Rio T."/>
            <person name="Tice H."/>
            <person name="Dalin E."/>
            <person name="Barry K."/>
            <person name="Pitluck S."/>
            <person name="Hauser L."/>
            <person name="Land M."/>
            <person name="Lucas S."/>
            <person name="Richardson P."/>
            <person name="Whitman W.B."/>
            <person name="Kyrpides N.C."/>
        </authorList>
    </citation>
    <scope>NUCLEOTIDE SEQUENCE [LARGE SCALE GENOMIC DNA]</scope>
    <source>
        <strain>ATCC 43576 / DSM 4855 / Z</strain>
    </source>
</reference>
<comment type="function">
    <text evidence="1">Catalyzes the attachment of glutamate to tRNA(Glu) in a two-step reaction: glutamate is first activated by ATP to form Glu-AMP and then transferred to the acceptor end of tRNA(Glu).</text>
</comment>
<comment type="catalytic activity">
    <reaction evidence="1">
        <text>tRNA(Glu) + L-glutamate + ATP = L-glutamyl-tRNA(Glu) + AMP + diphosphate</text>
        <dbReference type="Rhea" id="RHEA:23540"/>
        <dbReference type="Rhea" id="RHEA-COMP:9663"/>
        <dbReference type="Rhea" id="RHEA-COMP:9680"/>
        <dbReference type="ChEBI" id="CHEBI:29985"/>
        <dbReference type="ChEBI" id="CHEBI:30616"/>
        <dbReference type="ChEBI" id="CHEBI:33019"/>
        <dbReference type="ChEBI" id="CHEBI:78442"/>
        <dbReference type="ChEBI" id="CHEBI:78520"/>
        <dbReference type="ChEBI" id="CHEBI:456215"/>
        <dbReference type="EC" id="6.1.1.17"/>
    </reaction>
</comment>
<comment type="subcellular location">
    <subcellularLocation>
        <location evidence="1">Cytoplasm</location>
    </subcellularLocation>
</comment>
<comment type="similarity">
    <text evidence="1">Belongs to the class-I aminoacyl-tRNA synthetase family. Glutamate--tRNA ligase type 2 subfamily.</text>
</comment>
<gene>
    <name evidence="1" type="primary">gltX</name>
    <name type="ordered locus">Mlab_0747</name>
</gene>
<proteinExistence type="inferred from homology"/>
<protein>
    <recommendedName>
        <fullName evidence="1">Glutamate--tRNA ligase</fullName>
        <ecNumber evidence="1">6.1.1.17</ecNumber>
    </recommendedName>
    <alternativeName>
        <fullName evidence="1">Glutamyl-tRNA synthetase</fullName>
        <shortName evidence="1">GluRS</shortName>
    </alternativeName>
</protein>
<dbReference type="EC" id="6.1.1.17" evidence="1"/>
<dbReference type="EMBL" id="CP000559">
    <property type="protein sequence ID" value="ABN06918.1"/>
    <property type="molecule type" value="Genomic_DNA"/>
</dbReference>
<dbReference type="RefSeq" id="WP_011833119.1">
    <property type="nucleotide sequence ID" value="NC_008942.1"/>
</dbReference>
<dbReference type="SMR" id="A2SRG2"/>
<dbReference type="STRING" id="410358.Mlab_0747"/>
<dbReference type="GeneID" id="4795118"/>
<dbReference type="KEGG" id="mla:Mlab_0747"/>
<dbReference type="eggNOG" id="arCOG04302">
    <property type="taxonomic scope" value="Archaea"/>
</dbReference>
<dbReference type="HOGENOM" id="CLU_001882_1_3_2"/>
<dbReference type="OrthoDB" id="10470at2157"/>
<dbReference type="Proteomes" id="UP000000365">
    <property type="component" value="Chromosome"/>
</dbReference>
<dbReference type="GO" id="GO:0005829">
    <property type="term" value="C:cytosol"/>
    <property type="evidence" value="ECO:0007669"/>
    <property type="project" value="TreeGrafter"/>
</dbReference>
<dbReference type="GO" id="GO:0032991">
    <property type="term" value="C:protein-containing complex"/>
    <property type="evidence" value="ECO:0007669"/>
    <property type="project" value="UniProtKB-ARBA"/>
</dbReference>
<dbReference type="GO" id="GO:0005524">
    <property type="term" value="F:ATP binding"/>
    <property type="evidence" value="ECO:0007669"/>
    <property type="project" value="UniProtKB-UniRule"/>
</dbReference>
<dbReference type="GO" id="GO:0004818">
    <property type="term" value="F:glutamate-tRNA ligase activity"/>
    <property type="evidence" value="ECO:0007669"/>
    <property type="project" value="UniProtKB-UniRule"/>
</dbReference>
<dbReference type="GO" id="GO:0043604">
    <property type="term" value="P:amide biosynthetic process"/>
    <property type="evidence" value="ECO:0007669"/>
    <property type="project" value="TreeGrafter"/>
</dbReference>
<dbReference type="GO" id="GO:0006424">
    <property type="term" value="P:glutamyl-tRNA aminoacylation"/>
    <property type="evidence" value="ECO:0007669"/>
    <property type="project" value="UniProtKB-UniRule"/>
</dbReference>
<dbReference type="Gene3D" id="2.40.240.100">
    <property type="match status" value="1"/>
</dbReference>
<dbReference type="Gene3D" id="3.40.50.620">
    <property type="entry name" value="HUPs"/>
    <property type="match status" value="1"/>
</dbReference>
<dbReference type="Gene3D" id="2.40.240.10">
    <property type="entry name" value="Ribosomal Protein L25, Chain P"/>
    <property type="match status" value="1"/>
</dbReference>
<dbReference type="HAMAP" id="MF_02076">
    <property type="entry name" value="Glu_tRNA_synth_type2"/>
    <property type="match status" value="1"/>
</dbReference>
<dbReference type="InterPro" id="IPR001412">
    <property type="entry name" value="aa-tRNA-synth_I_CS"/>
</dbReference>
<dbReference type="InterPro" id="IPR050132">
    <property type="entry name" value="Gln/Glu-tRNA_Ligase"/>
</dbReference>
<dbReference type="InterPro" id="IPR004526">
    <property type="entry name" value="Glu-tRNA-synth_arc/euk"/>
</dbReference>
<dbReference type="InterPro" id="IPR000924">
    <property type="entry name" value="Glu/Gln-tRNA-synth"/>
</dbReference>
<dbReference type="InterPro" id="IPR020058">
    <property type="entry name" value="Glu/Gln-tRNA-synth_Ib_cat-dom"/>
</dbReference>
<dbReference type="InterPro" id="IPR020059">
    <property type="entry name" value="Glu/Gln-tRNA-synth_Ib_codon-bd"/>
</dbReference>
<dbReference type="InterPro" id="IPR020056">
    <property type="entry name" value="Rbsml_bL25/Gln-tRNA_synth_N"/>
</dbReference>
<dbReference type="InterPro" id="IPR011035">
    <property type="entry name" value="Ribosomal_bL25/Gln-tRNA_synth"/>
</dbReference>
<dbReference type="InterPro" id="IPR014729">
    <property type="entry name" value="Rossmann-like_a/b/a_fold"/>
</dbReference>
<dbReference type="InterPro" id="IPR049437">
    <property type="entry name" value="tRNA-synt_1c_C2"/>
</dbReference>
<dbReference type="NCBIfam" id="TIGR00463">
    <property type="entry name" value="gltX_arch"/>
    <property type="match status" value="1"/>
</dbReference>
<dbReference type="NCBIfam" id="NF003169">
    <property type="entry name" value="PRK04156.1"/>
    <property type="match status" value="1"/>
</dbReference>
<dbReference type="PANTHER" id="PTHR43097:SF5">
    <property type="entry name" value="GLUTAMATE--TRNA LIGASE"/>
    <property type="match status" value="1"/>
</dbReference>
<dbReference type="PANTHER" id="PTHR43097">
    <property type="entry name" value="GLUTAMINE-TRNA LIGASE"/>
    <property type="match status" value="1"/>
</dbReference>
<dbReference type="Pfam" id="PF00749">
    <property type="entry name" value="tRNA-synt_1c"/>
    <property type="match status" value="1"/>
</dbReference>
<dbReference type="Pfam" id="PF03950">
    <property type="entry name" value="tRNA-synt_1c_C"/>
    <property type="match status" value="1"/>
</dbReference>
<dbReference type="Pfam" id="PF20974">
    <property type="entry name" value="tRNA-synt_1c_C2"/>
    <property type="match status" value="1"/>
</dbReference>
<dbReference type="PRINTS" id="PR00987">
    <property type="entry name" value="TRNASYNTHGLU"/>
</dbReference>
<dbReference type="SUPFAM" id="SSF52374">
    <property type="entry name" value="Nucleotidylyl transferase"/>
    <property type="match status" value="1"/>
</dbReference>
<dbReference type="SUPFAM" id="SSF50715">
    <property type="entry name" value="Ribosomal protein L25-like"/>
    <property type="match status" value="1"/>
</dbReference>
<dbReference type="PROSITE" id="PS00178">
    <property type="entry name" value="AA_TRNA_LIGASE_I"/>
    <property type="match status" value="1"/>
</dbReference>
<keyword id="KW-0030">Aminoacyl-tRNA synthetase</keyword>
<keyword id="KW-0067">ATP-binding</keyword>
<keyword id="KW-0963">Cytoplasm</keyword>
<keyword id="KW-0436">Ligase</keyword>
<keyword id="KW-0547">Nucleotide-binding</keyword>
<keyword id="KW-0648">Protein biosynthesis</keyword>
<keyword id="KW-1185">Reference proteome</keyword>
<name>SYE_METLZ</name>